<gene>
    <name evidence="1" type="primary">rpsK</name>
    <name type="ordered locus">Bfl214</name>
</gene>
<sequence>MIKSSSLRLRKRIKKQVTDGIAHIHASFNNTIVTISDRQGNTLGWATSGGSGFRGSRKSTPFAAQIAAERCAEIVQEYGVKNLEVMVKGPGPGRESAVRALNAAGFHIISIIDVTPIPHNGCRPAKKRRV</sequence>
<comment type="function">
    <text evidence="1">Located on the platform of the 30S subunit, it bridges several disparate RNA helices of the 16S rRNA. Forms part of the Shine-Dalgarno cleft in the 70S ribosome.</text>
</comment>
<comment type="subunit">
    <text evidence="1">Part of the 30S ribosomal subunit. Interacts with proteins S7 and S18. Binds to IF-3.</text>
</comment>
<comment type="similarity">
    <text evidence="1">Belongs to the universal ribosomal protein uS11 family.</text>
</comment>
<accession>Q7VQC5</accession>
<organism>
    <name type="scientific">Blochmanniella floridana</name>
    <dbReference type="NCBI Taxonomy" id="203907"/>
    <lineage>
        <taxon>Bacteria</taxon>
        <taxon>Pseudomonadati</taxon>
        <taxon>Pseudomonadota</taxon>
        <taxon>Gammaproteobacteria</taxon>
        <taxon>Enterobacterales</taxon>
        <taxon>Enterobacteriaceae</taxon>
        <taxon>ant endosymbionts</taxon>
        <taxon>Candidatus Blochmanniella</taxon>
    </lineage>
</organism>
<evidence type="ECO:0000255" key="1">
    <source>
        <dbReference type="HAMAP-Rule" id="MF_01310"/>
    </source>
</evidence>
<evidence type="ECO:0000305" key="2"/>
<protein>
    <recommendedName>
        <fullName evidence="1">Small ribosomal subunit protein uS11</fullName>
    </recommendedName>
    <alternativeName>
        <fullName evidence="2">30S ribosomal protein S11</fullName>
    </alternativeName>
</protein>
<reference key="1">
    <citation type="journal article" date="2003" name="Proc. Natl. Acad. Sci. U.S.A.">
        <title>The genome sequence of Blochmannia floridanus: comparative analysis of reduced genomes.</title>
        <authorList>
            <person name="Gil R."/>
            <person name="Silva F.J."/>
            <person name="Zientz E."/>
            <person name="Delmotte F."/>
            <person name="Gonzalez-Candelas F."/>
            <person name="Latorre A."/>
            <person name="Rausell C."/>
            <person name="Kamerbeek J."/>
            <person name="Gadau J."/>
            <person name="Hoelldobler B."/>
            <person name="van Ham R.C.H.J."/>
            <person name="Gross R."/>
            <person name="Moya A."/>
        </authorList>
    </citation>
    <scope>NUCLEOTIDE SEQUENCE [LARGE SCALE GENOMIC DNA]</scope>
</reference>
<dbReference type="EMBL" id="BX248583">
    <property type="protein sequence ID" value="CAD83729.1"/>
    <property type="molecule type" value="Genomic_DNA"/>
</dbReference>
<dbReference type="SMR" id="Q7VQC5"/>
<dbReference type="STRING" id="203907.Bfl214"/>
<dbReference type="KEGG" id="bfl:Bfl214"/>
<dbReference type="eggNOG" id="COG0100">
    <property type="taxonomic scope" value="Bacteria"/>
</dbReference>
<dbReference type="HOGENOM" id="CLU_072439_5_0_6"/>
<dbReference type="OrthoDB" id="9806415at2"/>
<dbReference type="Proteomes" id="UP000002192">
    <property type="component" value="Chromosome"/>
</dbReference>
<dbReference type="GO" id="GO:1990904">
    <property type="term" value="C:ribonucleoprotein complex"/>
    <property type="evidence" value="ECO:0007669"/>
    <property type="project" value="UniProtKB-KW"/>
</dbReference>
<dbReference type="GO" id="GO:0005840">
    <property type="term" value="C:ribosome"/>
    <property type="evidence" value="ECO:0007669"/>
    <property type="project" value="UniProtKB-KW"/>
</dbReference>
<dbReference type="GO" id="GO:0019843">
    <property type="term" value="F:rRNA binding"/>
    <property type="evidence" value="ECO:0007669"/>
    <property type="project" value="UniProtKB-UniRule"/>
</dbReference>
<dbReference type="GO" id="GO:0003735">
    <property type="term" value="F:structural constituent of ribosome"/>
    <property type="evidence" value="ECO:0007669"/>
    <property type="project" value="InterPro"/>
</dbReference>
<dbReference type="GO" id="GO:0006412">
    <property type="term" value="P:translation"/>
    <property type="evidence" value="ECO:0007669"/>
    <property type="project" value="UniProtKB-UniRule"/>
</dbReference>
<dbReference type="FunFam" id="3.30.420.80:FF:000001">
    <property type="entry name" value="30S ribosomal protein S11"/>
    <property type="match status" value="1"/>
</dbReference>
<dbReference type="Gene3D" id="3.30.420.80">
    <property type="entry name" value="Ribosomal protein S11"/>
    <property type="match status" value="1"/>
</dbReference>
<dbReference type="HAMAP" id="MF_01310">
    <property type="entry name" value="Ribosomal_uS11"/>
    <property type="match status" value="1"/>
</dbReference>
<dbReference type="InterPro" id="IPR001971">
    <property type="entry name" value="Ribosomal_uS11"/>
</dbReference>
<dbReference type="InterPro" id="IPR019981">
    <property type="entry name" value="Ribosomal_uS11_bac-type"/>
</dbReference>
<dbReference type="InterPro" id="IPR018102">
    <property type="entry name" value="Ribosomal_uS11_CS"/>
</dbReference>
<dbReference type="InterPro" id="IPR036967">
    <property type="entry name" value="Ribosomal_uS11_sf"/>
</dbReference>
<dbReference type="NCBIfam" id="NF003698">
    <property type="entry name" value="PRK05309.1"/>
    <property type="match status" value="1"/>
</dbReference>
<dbReference type="NCBIfam" id="TIGR03632">
    <property type="entry name" value="uS11_bact"/>
    <property type="match status" value="1"/>
</dbReference>
<dbReference type="PANTHER" id="PTHR11759">
    <property type="entry name" value="40S RIBOSOMAL PROTEIN S14/30S RIBOSOMAL PROTEIN S11"/>
    <property type="match status" value="1"/>
</dbReference>
<dbReference type="Pfam" id="PF00411">
    <property type="entry name" value="Ribosomal_S11"/>
    <property type="match status" value="1"/>
</dbReference>
<dbReference type="PIRSF" id="PIRSF002131">
    <property type="entry name" value="Ribosomal_S11"/>
    <property type="match status" value="1"/>
</dbReference>
<dbReference type="SUPFAM" id="SSF53137">
    <property type="entry name" value="Translational machinery components"/>
    <property type="match status" value="1"/>
</dbReference>
<dbReference type="PROSITE" id="PS00054">
    <property type="entry name" value="RIBOSOMAL_S11"/>
    <property type="match status" value="1"/>
</dbReference>
<feature type="chain" id="PRO_0000123126" description="Small ribosomal subunit protein uS11">
    <location>
        <begin position="1"/>
        <end position="130"/>
    </location>
</feature>
<name>RS11_BLOFL</name>
<keyword id="KW-1185">Reference proteome</keyword>
<keyword id="KW-0687">Ribonucleoprotein</keyword>
<keyword id="KW-0689">Ribosomal protein</keyword>
<keyword id="KW-0694">RNA-binding</keyword>
<keyword id="KW-0699">rRNA-binding</keyword>
<proteinExistence type="inferred from homology"/>